<feature type="chain" id="PRO_0000243719" description="Large ribosomal subunit protein bL20">
    <location>
        <begin position="1"/>
        <end position="118"/>
    </location>
</feature>
<proteinExistence type="inferred from homology"/>
<keyword id="KW-1185">Reference proteome</keyword>
<keyword id="KW-0687">Ribonucleoprotein</keyword>
<keyword id="KW-0689">Ribosomal protein</keyword>
<keyword id="KW-0694">RNA-binding</keyword>
<keyword id="KW-0699">rRNA-binding</keyword>
<reference key="1">
    <citation type="journal article" date="2010" name="Appl. Environ. Microbiol.">
        <title>The genome sequence of Psychrobacter arcticus 273-4, a psychroactive Siberian permafrost bacterium, reveals mechanisms for adaptation to low-temperature growth.</title>
        <authorList>
            <person name="Ayala-del-Rio H.L."/>
            <person name="Chain P.S."/>
            <person name="Grzymski J.J."/>
            <person name="Ponder M.A."/>
            <person name="Ivanova N."/>
            <person name="Bergholz P.W."/>
            <person name="Di Bartolo G."/>
            <person name="Hauser L."/>
            <person name="Land M."/>
            <person name="Bakermans C."/>
            <person name="Rodrigues D."/>
            <person name="Klappenbach J."/>
            <person name="Zarka D."/>
            <person name="Larimer F."/>
            <person name="Richardson P."/>
            <person name="Murray A."/>
            <person name="Thomashow M."/>
            <person name="Tiedje J.M."/>
        </authorList>
    </citation>
    <scope>NUCLEOTIDE SEQUENCE [LARGE SCALE GENOMIC DNA]</scope>
    <source>
        <strain>DSM 17307 / VKM B-2377 / 273-4</strain>
    </source>
</reference>
<gene>
    <name evidence="1" type="primary">rplT</name>
    <name type="ordered locus">Psyc_1997</name>
</gene>
<organism>
    <name type="scientific">Psychrobacter arcticus (strain DSM 17307 / VKM B-2377 / 273-4)</name>
    <dbReference type="NCBI Taxonomy" id="259536"/>
    <lineage>
        <taxon>Bacteria</taxon>
        <taxon>Pseudomonadati</taxon>
        <taxon>Pseudomonadota</taxon>
        <taxon>Gammaproteobacteria</taxon>
        <taxon>Moraxellales</taxon>
        <taxon>Moraxellaceae</taxon>
        <taxon>Psychrobacter</taxon>
    </lineage>
</organism>
<protein>
    <recommendedName>
        <fullName evidence="1">Large ribosomal subunit protein bL20</fullName>
    </recommendedName>
    <alternativeName>
        <fullName evidence="2">50S ribosomal protein L20</fullName>
    </alternativeName>
</protein>
<name>RL20_PSYA2</name>
<dbReference type="EMBL" id="CP000082">
    <property type="protein sequence ID" value="AAZ19844.1"/>
    <property type="molecule type" value="Genomic_DNA"/>
</dbReference>
<dbReference type="RefSeq" id="WP_011281252.1">
    <property type="nucleotide sequence ID" value="NC_007204.1"/>
</dbReference>
<dbReference type="SMR" id="Q4FQ64"/>
<dbReference type="STRING" id="259536.Psyc_1997"/>
<dbReference type="KEGG" id="par:Psyc_1997"/>
<dbReference type="eggNOG" id="COG0292">
    <property type="taxonomic scope" value="Bacteria"/>
</dbReference>
<dbReference type="HOGENOM" id="CLU_123265_0_1_6"/>
<dbReference type="OrthoDB" id="9808966at2"/>
<dbReference type="Proteomes" id="UP000000546">
    <property type="component" value="Chromosome"/>
</dbReference>
<dbReference type="GO" id="GO:1990904">
    <property type="term" value="C:ribonucleoprotein complex"/>
    <property type="evidence" value="ECO:0007669"/>
    <property type="project" value="UniProtKB-KW"/>
</dbReference>
<dbReference type="GO" id="GO:0005840">
    <property type="term" value="C:ribosome"/>
    <property type="evidence" value="ECO:0007669"/>
    <property type="project" value="UniProtKB-KW"/>
</dbReference>
<dbReference type="GO" id="GO:0019843">
    <property type="term" value="F:rRNA binding"/>
    <property type="evidence" value="ECO:0007669"/>
    <property type="project" value="UniProtKB-UniRule"/>
</dbReference>
<dbReference type="GO" id="GO:0003735">
    <property type="term" value="F:structural constituent of ribosome"/>
    <property type="evidence" value="ECO:0007669"/>
    <property type="project" value="InterPro"/>
</dbReference>
<dbReference type="GO" id="GO:0000027">
    <property type="term" value="P:ribosomal large subunit assembly"/>
    <property type="evidence" value="ECO:0007669"/>
    <property type="project" value="UniProtKB-UniRule"/>
</dbReference>
<dbReference type="GO" id="GO:0006412">
    <property type="term" value="P:translation"/>
    <property type="evidence" value="ECO:0007669"/>
    <property type="project" value="InterPro"/>
</dbReference>
<dbReference type="CDD" id="cd07026">
    <property type="entry name" value="Ribosomal_L20"/>
    <property type="match status" value="1"/>
</dbReference>
<dbReference type="FunFam" id="1.10.1900.20:FF:000001">
    <property type="entry name" value="50S ribosomal protein L20"/>
    <property type="match status" value="1"/>
</dbReference>
<dbReference type="Gene3D" id="6.10.160.10">
    <property type="match status" value="1"/>
</dbReference>
<dbReference type="Gene3D" id="1.10.1900.20">
    <property type="entry name" value="Ribosomal protein L20"/>
    <property type="match status" value="1"/>
</dbReference>
<dbReference type="HAMAP" id="MF_00382">
    <property type="entry name" value="Ribosomal_bL20"/>
    <property type="match status" value="1"/>
</dbReference>
<dbReference type="InterPro" id="IPR005813">
    <property type="entry name" value="Ribosomal_bL20"/>
</dbReference>
<dbReference type="InterPro" id="IPR049946">
    <property type="entry name" value="RIBOSOMAL_L20_CS"/>
</dbReference>
<dbReference type="InterPro" id="IPR035566">
    <property type="entry name" value="Ribosomal_protein_bL20_C"/>
</dbReference>
<dbReference type="NCBIfam" id="TIGR01032">
    <property type="entry name" value="rplT_bact"/>
    <property type="match status" value="1"/>
</dbReference>
<dbReference type="PANTHER" id="PTHR10986">
    <property type="entry name" value="39S RIBOSOMAL PROTEIN L20"/>
    <property type="match status" value="1"/>
</dbReference>
<dbReference type="Pfam" id="PF00453">
    <property type="entry name" value="Ribosomal_L20"/>
    <property type="match status" value="1"/>
</dbReference>
<dbReference type="PRINTS" id="PR00062">
    <property type="entry name" value="RIBOSOMALL20"/>
</dbReference>
<dbReference type="SUPFAM" id="SSF74731">
    <property type="entry name" value="Ribosomal protein L20"/>
    <property type="match status" value="1"/>
</dbReference>
<dbReference type="PROSITE" id="PS00937">
    <property type="entry name" value="RIBOSOMAL_L20"/>
    <property type="match status" value="1"/>
</dbReference>
<accession>Q4FQ64</accession>
<evidence type="ECO:0000255" key="1">
    <source>
        <dbReference type="HAMAP-Rule" id="MF_00382"/>
    </source>
</evidence>
<evidence type="ECO:0000305" key="2"/>
<sequence>MARVKRGVQANRRHKKILKRAKGYYGARSRVYRVAVQAVTKAGQYAYRDRRNKKRTFRRLWIARINAGARLNGLSYSRFINGMKKANIAIDRRVLADIAMHDAATFTALVEKAKAELA</sequence>
<comment type="function">
    <text evidence="1">Binds directly to 23S ribosomal RNA and is necessary for the in vitro assembly process of the 50S ribosomal subunit. It is not involved in the protein synthesizing functions of that subunit.</text>
</comment>
<comment type="similarity">
    <text evidence="1">Belongs to the bacterial ribosomal protein bL20 family.</text>
</comment>